<organism>
    <name type="scientific">Homo sapiens</name>
    <name type="common">Human</name>
    <dbReference type="NCBI Taxonomy" id="9606"/>
    <lineage>
        <taxon>Eukaryota</taxon>
        <taxon>Metazoa</taxon>
        <taxon>Chordata</taxon>
        <taxon>Craniata</taxon>
        <taxon>Vertebrata</taxon>
        <taxon>Euteleostomi</taxon>
        <taxon>Mammalia</taxon>
        <taxon>Eutheria</taxon>
        <taxon>Euarchontoglires</taxon>
        <taxon>Primates</taxon>
        <taxon>Haplorrhini</taxon>
        <taxon>Catarrhini</taxon>
        <taxon>Hominidae</taxon>
        <taxon>Homo</taxon>
    </lineage>
</organism>
<reference evidence="9 13" key="1">
    <citation type="journal article" date="2003" name="DNA Seq.">
        <title>Human fast skeletal myosin light chain 2 cDNA: isolation, tissue specific expression of the single copy gene, comparative sequence analysis of isoforms and evolutionary relationships.</title>
        <authorList>
            <person name="Sachdev S."/>
            <person name="Raychowdhury M.K."/>
            <person name="Sarkar S."/>
        </authorList>
    </citation>
    <scope>NUCLEOTIDE SEQUENCE [MRNA]</scope>
    <scope>TISSUE SPECIFICITY</scope>
    <source>
        <tissue evidence="13">Skeletal muscle</tissue>
    </source>
</reference>
<reference evidence="10" key="2">
    <citation type="submission" date="1996-03" db="EMBL/GenBank/DDBJ databases">
        <title>Characterization of a full length human skeletal fast light chain 2 cDNA.</title>
        <authorList>
            <person name="Wu Q.L."/>
        </authorList>
    </citation>
    <scope>NUCLEOTIDE SEQUENCE [MRNA]</scope>
    <source>
        <tissue evidence="10">Skeletal muscle</tissue>
    </source>
</reference>
<reference evidence="10" key="3">
    <citation type="submission" date="2001-03" db="EMBL/GenBank/DDBJ databases">
        <title>Cloning and characterization of a human MRLC2 gene encoding a myosin regulatory light chain.</title>
        <authorList>
            <person name="Gong L."/>
            <person name="Wang Y.-G."/>
            <person name="Li T."/>
            <person name="Wu K."/>
        </authorList>
    </citation>
    <scope>NUCLEOTIDE SEQUENCE [MRNA]</scope>
    <source>
        <tissue evidence="12">Placenta</tissue>
    </source>
</reference>
<reference evidence="10" key="4">
    <citation type="submission" date="2004-06" db="EMBL/GenBank/DDBJ databases">
        <title>Cloning of human full open reading frames in Gateway(TM) system entry vector (pDONR201).</title>
        <authorList>
            <person name="Ebert L."/>
            <person name="Schick M."/>
            <person name="Neubert P."/>
            <person name="Schatten R."/>
            <person name="Henze S."/>
            <person name="Korn B."/>
        </authorList>
    </citation>
    <scope>NUCLEOTIDE SEQUENCE [LARGE SCALE MRNA]</scope>
</reference>
<reference key="5">
    <citation type="journal article" date="2004" name="Nat. Genet.">
        <title>Complete sequencing and characterization of 21,243 full-length human cDNAs.</title>
        <authorList>
            <person name="Ota T."/>
            <person name="Suzuki Y."/>
            <person name="Nishikawa T."/>
            <person name="Otsuki T."/>
            <person name="Sugiyama T."/>
            <person name="Irie R."/>
            <person name="Wakamatsu A."/>
            <person name="Hayashi K."/>
            <person name="Sato H."/>
            <person name="Nagai K."/>
            <person name="Kimura K."/>
            <person name="Makita H."/>
            <person name="Sekine M."/>
            <person name="Obayashi M."/>
            <person name="Nishi T."/>
            <person name="Shibahara T."/>
            <person name="Tanaka T."/>
            <person name="Ishii S."/>
            <person name="Yamamoto J."/>
            <person name="Saito K."/>
            <person name="Kawai Y."/>
            <person name="Isono Y."/>
            <person name="Nakamura Y."/>
            <person name="Nagahari K."/>
            <person name="Murakami K."/>
            <person name="Yasuda T."/>
            <person name="Iwayanagi T."/>
            <person name="Wagatsuma M."/>
            <person name="Shiratori A."/>
            <person name="Sudo H."/>
            <person name="Hosoiri T."/>
            <person name="Kaku Y."/>
            <person name="Kodaira H."/>
            <person name="Kondo H."/>
            <person name="Sugawara M."/>
            <person name="Takahashi M."/>
            <person name="Kanda K."/>
            <person name="Yokoi T."/>
            <person name="Furuya T."/>
            <person name="Kikkawa E."/>
            <person name="Omura Y."/>
            <person name="Abe K."/>
            <person name="Kamihara K."/>
            <person name="Katsuta N."/>
            <person name="Sato K."/>
            <person name="Tanikawa M."/>
            <person name="Yamazaki M."/>
            <person name="Ninomiya K."/>
            <person name="Ishibashi T."/>
            <person name="Yamashita H."/>
            <person name="Murakawa K."/>
            <person name="Fujimori K."/>
            <person name="Tanai H."/>
            <person name="Kimata M."/>
            <person name="Watanabe M."/>
            <person name="Hiraoka S."/>
            <person name="Chiba Y."/>
            <person name="Ishida S."/>
            <person name="Ono Y."/>
            <person name="Takiguchi S."/>
            <person name="Watanabe S."/>
            <person name="Yosida M."/>
            <person name="Hotuta T."/>
            <person name="Kusano J."/>
            <person name="Kanehori K."/>
            <person name="Takahashi-Fujii A."/>
            <person name="Hara H."/>
            <person name="Tanase T.-O."/>
            <person name="Nomura Y."/>
            <person name="Togiya S."/>
            <person name="Komai F."/>
            <person name="Hara R."/>
            <person name="Takeuchi K."/>
            <person name="Arita M."/>
            <person name="Imose N."/>
            <person name="Musashino K."/>
            <person name="Yuuki H."/>
            <person name="Oshima A."/>
            <person name="Sasaki N."/>
            <person name="Aotsuka S."/>
            <person name="Yoshikawa Y."/>
            <person name="Matsunawa H."/>
            <person name="Ichihara T."/>
            <person name="Shiohata N."/>
            <person name="Sano S."/>
            <person name="Moriya S."/>
            <person name="Momiyama H."/>
            <person name="Satoh N."/>
            <person name="Takami S."/>
            <person name="Terashima Y."/>
            <person name="Suzuki O."/>
            <person name="Nakagawa S."/>
            <person name="Senoh A."/>
            <person name="Mizoguchi H."/>
            <person name="Goto Y."/>
            <person name="Shimizu F."/>
            <person name="Wakebe H."/>
            <person name="Hishigaki H."/>
            <person name="Watanabe T."/>
            <person name="Sugiyama A."/>
            <person name="Takemoto M."/>
            <person name="Kawakami B."/>
            <person name="Yamazaki M."/>
            <person name="Watanabe K."/>
            <person name="Kumagai A."/>
            <person name="Itakura S."/>
            <person name="Fukuzumi Y."/>
            <person name="Fujimori Y."/>
            <person name="Komiyama M."/>
            <person name="Tashiro H."/>
            <person name="Tanigami A."/>
            <person name="Fujiwara T."/>
            <person name="Ono T."/>
            <person name="Yamada K."/>
            <person name="Fujii Y."/>
            <person name="Ozaki K."/>
            <person name="Hirao M."/>
            <person name="Ohmori Y."/>
            <person name="Kawabata A."/>
            <person name="Hikiji T."/>
            <person name="Kobatake N."/>
            <person name="Inagaki H."/>
            <person name="Ikema Y."/>
            <person name="Okamoto S."/>
            <person name="Okitani R."/>
            <person name="Kawakami T."/>
            <person name="Noguchi S."/>
            <person name="Itoh T."/>
            <person name="Shigeta K."/>
            <person name="Senba T."/>
            <person name="Matsumura K."/>
            <person name="Nakajima Y."/>
            <person name="Mizuno T."/>
            <person name="Morinaga M."/>
            <person name="Sasaki M."/>
            <person name="Togashi T."/>
            <person name="Oyama M."/>
            <person name="Hata H."/>
            <person name="Watanabe M."/>
            <person name="Komatsu T."/>
            <person name="Mizushima-Sugano J."/>
            <person name="Satoh T."/>
            <person name="Shirai Y."/>
            <person name="Takahashi Y."/>
            <person name="Nakagawa K."/>
            <person name="Okumura K."/>
            <person name="Nagase T."/>
            <person name="Nomura N."/>
            <person name="Kikuchi H."/>
            <person name="Masuho Y."/>
            <person name="Yamashita R."/>
            <person name="Nakai K."/>
            <person name="Yada T."/>
            <person name="Nakamura Y."/>
            <person name="Ohara O."/>
            <person name="Isogai T."/>
            <person name="Sugano S."/>
        </authorList>
    </citation>
    <scope>NUCLEOTIDE SEQUENCE [LARGE SCALE MRNA]</scope>
    <source>
        <tissue>Tongue</tissue>
    </source>
</reference>
<reference evidence="10" key="6">
    <citation type="submission" date="2005-07" db="EMBL/GenBank/DDBJ databases">
        <authorList>
            <person name="Mural R.J."/>
            <person name="Istrail S."/>
            <person name="Sutton G.G."/>
            <person name="Florea L."/>
            <person name="Halpern A.L."/>
            <person name="Mobarry C.M."/>
            <person name="Lippert R."/>
            <person name="Walenz B."/>
            <person name="Shatkay H."/>
            <person name="Dew I."/>
            <person name="Miller J.R."/>
            <person name="Flanigan M.J."/>
            <person name="Edwards N.J."/>
            <person name="Bolanos R."/>
            <person name="Fasulo D."/>
            <person name="Halldorsson B.V."/>
            <person name="Hannenhalli S."/>
            <person name="Turner R."/>
            <person name="Yooseph S."/>
            <person name="Lu F."/>
            <person name="Nusskern D.R."/>
            <person name="Shue B.C."/>
            <person name="Zheng X.H."/>
            <person name="Zhong F."/>
            <person name="Delcher A.L."/>
            <person name="Huson D.H."/>
            <person name="Kravitz S.A."/>
            <person name="Mouchard L."/>
            <person name="Reinert K."/>
            <person name="Remington K.A."/>
            <person name="Clark A.G."/>
            <person name="Waterman M.S."/>
            <person name="Eichler E.E."/>
            <person name="Adams M.D."/>
            <person name="Hunkapiller M.W."/>
            <person name="Myers E.W."/>
            <person name="Venter J.C."/>
        </authorList>
    </citation>
    <scope>NUCLEOTIDE SEQUENCE [LARGE SCALE GENOMIC DNA]</scope>
</reference>
<reference evidence="11" key="7">
    <citation type="journal article" date="2004" name="Genome Res.">
        <title>The status, quality, and expansion of the NIH full-length cDNA project: the Mammalian Gene Collection (MGC).</title>
        <authorList>
            <consortium name="The MGC Project Team"/>
        </authorList>
    </citation>
    <scope>NUCLEOTIDE SEQUENCE [LARGE SCALE MRNA]</scope>
    <source>
        <tissue evidence="11">Skeletal muscle</tissue>
    </source>
</reference>
<reference key="8">
    <citation type="journal article" date="2020" name="Am. J. Hum. Genet.">
        <title>Mutations in MYLPF Cause a Novel Segmental Amyoplasia that Manifests as Distal Arthrogryposis.</title>
        <authorList>
            <consortium name="University of Washington Center for Mendelian Genomics"/>
            <person name="Chong J.X."/>
            <person name="Talbot J.C."/>
            <person name="Teets E.M."/>
            <person name="Previs S."/>
            <person name="Martin B.L."/>
            <person name="Shively K.M."/>
            <person name="Marvin C.T."/>
            <person name="Aylsworth A.S."/>
            <person name="Saadeh-Haddad R."/>
            <person name="Schatz U.A."/>
            <person name="Inzana F."/>
            <person name="Ben-Omran T."/>
            <person name="Almusafri F."/>
            <person name="Al-Mulla M."/>
            <person name="Buckingham K.J."/>
            <person name="Harel T."/>
            <person name="Mor-Shaked H."/>
            <person name="Radhakrishnan P."/>
            <person name="Girisha K.M."/>
            <person name="Nayak S.S."/>
            <person name="Shukla A."/>
            <person name="Dieterich K."/>
            <person name="Faure J."/>
            <person name="Rendu J."/>
            <person name="Capri Y."/>
            <person name="Latypova X."/>
            <person name="Nickerson D.A."/>
            <person name="Warshaw D.M."/>
            <person name="Janssen P.M.L."/>
            <person name="Amacher S.L."/>
            <person name="Bamshad M.J."/>
        </authorList>
    </citation>
    <scope>INVOLVEMENT IN DA1C</scope>
    <scope>VARIANTS DA1C VAL-33; ARG-157; PHE-157 AND SER-163</scope>
</reference>
<protein>
    <recommendedName>
        <fullName evidence="9">Myosin regulatory light chain 11</fullName>
    </recommendedName>
    <alternativeName>
        <fullName evidence="8">Fast skeletal myosin light chain 2</fullName>
    </alternativeName>
    <alternativeName>
        <fullName>MLC2B</fullName>
    </alternativeName>
    <alternativeName>
        <fullName evidence="14">Myosin light chain 11</fullName>
    </alternativeName>
    <alternativeName>
        <fullName>Myosin regulatory light chain 2, skeletal muscle isoform</fullName>
    </alternativeName>
</protein>
<gene>
    <name evidence="14" type="primary">MYL11</name>
    <name evidence="8" type="synonym">HSRLC</name>
    <name type="synonym">MYLPF</name>
</gene>
<proteinExistence type="evidence at protein level"/>
<dbReference type="EMBL" id="X57543">
    <property type="protein sequence ID" value="CAA40762.1"/>
    <property type="molecule type" value="mRNA"/>
</dbReference>
<dbReference type="EMBL" id="M21812">
    <property type="protein sequence ID" value="AAA91848.1"/>
    <property type="molecule type" value="mRNA"/>
</dbReference>
<dbReference type="EMBL" id="AF363061">
    <property type="protein sequence ID" value="AAK52797.1"/>
    <property type="molecule type" value="mRNA"/>
</dbReference>
<dbReference type="EMBL" id="CR456963">
    <property type="protein sequence ID" value="CAG33244.1"/>
    <property type="molecule type" value="mRNA"/>
</dbReference>
<dbReference type="EMBL" id="AK314082">
    <property type="protein sequence ID" value="BAG36780.1"/>
    <property type="molecule type" value="mRNA"/>
</dbReference>
<dbReference type="EMBL" id="CH471192">
    <property type="protein sequence ID" value="EAW52254.1"/>
    <property type="molecule type" value="Genomic_DNA"/>
</dbReference>
<dbReference type="EMBL" id="CH471192">
    <property type="protein sequence ID" value="EAW52255.1"/>
    <property type="molecule type" value="Genomic_DNA"/>
</dbReference>
<dbReference type="EMBL" id="BC012571">
    <property type="protein sequence ID" value="AAH12571.1"/>
    <property type="molecule type" value="mRNA"/>
</dbReference>
<dbReference type="CCDS" id="CCDS10677.1"/>
<dbReference type="RefSeq" id="NP_001311387.1">
    <property type="nucleotide sequence ID" value="NM_001324458.2"/>
</dbReference>
<dbReference type="RefSeq" id="NP_001311388.1">
    <property type="nucleotide sequence ID" value="NM_001324459.2"/>
</dbReference>
<dbReference type="RefSeq" id="NP_037424.2">
    <property type="nucleotide sequence ID" value="NM_013292.4"/>
</dbReference>
<dbReference type="SMR" id="Q96A32"/>
<dbReference type="BioGRID" id="118947">
    <property type="interactions" value="21"/>
</dbReference>
<dbReference type="FunCoup" id="Q96A32">
    <property type="interactions" value="400"/>
</dbReference>
<dbReference type="IntAct" id="Q96A32">
    <property type="interactions" value="15"/>
</dbReference>
<dbReference type="STRING" id="9606.ENSP00000325239"/>
<dbReference type="iPTMnet" id="Q96A32"/>
<dbReference type="PhosphoSitePlus" id="Q96A32"/>
<dbReference type="BioMuta" id="MYLPF"/>
<dbReference type="DMDM" id="74760696"/>
<dbReference type="MassIVE" id="Q96A32"/>
<dbReference type="PaxDb" id="9606-ENSP00000325239"/>
<dbReference type="PeptideAtlas" id="Q96A32"/>
<dbReference type="ProteomicsDB" id="75901"/>
<dbReference type="Antibodypedia" id="13671">
    <property type="antibodies" value="179 antibodies from 29 providers"/>
</dbReference>
<dbReference type="DNASU" id="29895"/>
<dbReference type="Ensembl" id="ENST00000322861.12">
    <property type="protein sequence ID" value="ENSP00000325239.7"/>
    <property type="gene ID" value="ENSG00000180209.12"/>
</dbReference>
<dbReference type="GeneID" id="29895"/>
<dbReference type="KEGG" id="hsa:29895"/>
<dbReference type="MANE-Select" id="ENST00000322861.12">
    <property type="protein sequence ID" value="ENSP00000325239.7"/>
    <property type="RefSeq nucleotide sequence ID" value="NM_013292.5"/>
    <property type="RefSeq protein sequence ID" value="NP_037424.2"/>
</dbReference>
<dbReference type="UCSC" id="uc002dxv.2">
    <property type="organism name" value="human"/>
</dbReference>
<dbReference type="AGR" id="HGNC:29824"/>
<dbReference type="CTD" id="29895"/>
<dbReference type="DisGeNET" id="29895"/>
<dbReference type="GeneCards" id="MYL11"/>
<dbReference type="HGNC" id="HGNC:29824">
    <property type="gene designation" value="MYL11"/>
</dbReference>
<dbReference type="HPA" id="ENSG00000180209">
    <property type="expression patterns" value="Group enriched (skeletal muscle, tongue)"/>
</dbReference>
<dbReference type="MalaCards" id="MYL11"/>
<dbReference type="MIM" id="617378">
    <property type="type" value="gene"/>
</dbReference>
<dbReference type="MIM" id="619110">
    <property type="type" value="phenotype"/>
</dbReference>
<dbReference type="neXtProt" id="NX_Q96A32"/>
<dbReference type="OpenTargets" id="ENSG00000180209"/>
<dbReference type="PharmGKB" id="PA164723287"/>
<dbReference type="VEuPathDB" id="HostDB:ENSG00000180209"/>
<dbReference type="eggNOG" id="KOG0031">
    <property type="taxonomic scope" value="Eukaryota"/>
</dbReference>
<dbReference type="GeneTree" id="ENSGT00940000159038"/>
<dbReference type="InParanoid" id="Q96A32"/>
<dbReference type="OMA" id="KDLYAMM"/>
<dbReference type="OrthoDB" id="9002at9604"/>
<dbReference type="PAN-GO" id="Q96A32">
    <property type="GO annotations" value="3 GO annotations based on evolutionary models"/>
</dbReference>
<dbReference type="PhylomeDB" id="Q96A32"/>
<dbReference type="TreeFam" id="TF314218"/>
<dbReference type="PathwayCommons" id="Q96A32"/>
<dbReference type="Reactome" id="R-HSA-445355">
    <property type="pathway name" value="Smooth Muscle Contraction"/>
</dbReference>
<dbReference type="SignaLink" id="Q96A32"/>
<dbReference type="SIGNOR" id="Q96A32"/>
<dbReference type="BioGRID-ORCS" id="29895">
    <property type="hits" value="10 hits in 1146 CRISPR screens"/>
</dbReference>
<dbReference type="ChiTaRS" id="MYLPF">
    <property type="organism name" value="human"/>
</dbReference>
<dbReference type="GenomeRNAi" id="29895"/>
<dbReference type="Pharos" id="Q96A32">
    <property type="development level" value="Tbio"/>
</dbReference>
<dbReference type="PRO" id="PR:Q96A32"/>
<dbReference type="Proteomes" id="UP000005640">
    <property type="component" value="Chromosome 16"/>
</dbReference>
<dbReference type="RNAct" id="Q96A32">
    <property type="molecule type" value="protein"/>
</dbReference>
<dbReference type="Bgee" id="ENSG00000180209">
    <property type="expression patterns" value="Expressed in biceps brachii and 115 other cell types or tissues"/>
</dbReference>
<dbReference type="ExpressionAtlas" id="Q96A32">
    <property type="expression patterns" value="baseline and differential"/>
</dbReference>
<dbReference type="GO" id="GO:0005737">
    <property type="term" value="C:cytoplasm"/>
    <property type="evidence" value="ECO:0000318"/>
    <property type="project" value="GO_Central"/>
</dbReference>
<dbReference type="GO" id="GO:0005829">
    <property type="term" value="C:cytosol"/>
    <property type="evidence" value="ECO:0000304"/>
    <property type="project" value="Reactome"/>
</dbReference>
<dbReference type="GO" id="GO:0005765">
    <property type="term" value="C:lysosomal membrane"/>
    <property type="evidence" value="ECO:0007005"/>
    <property type="project" value="UniProtKB"/>
</dbReference>
<dbReference type="GO" id="GO:0005859">
    <property type="term" value="C:muscle myosin complex"/>
    <property type="evidence" value="ECO:0000304"/>
    <property type="project" value="ProtInc"/>
</dbReference>
<dbReference type="GO" id="GO:0005509">
    <property type="term" value="F:calcium ion binding"/>
    <property type="evidence" value="ECO:0000318"/>
    <property type="project" value="GO_Central"/>
</dbReference>
<dbReference type="GO" id="GO:0008307">
    <property type="term" value="F:structural constituent of muscle"/>
    <property type="evidence" value="ECO:0000250"/>
    <property type="project" value="BHF-UCL"/>
</dbReference>
<dbReference type="GO" id="GO:0033275">
    <property type="term" value="P:actin-myosin filament sliding"/>
    <property type="evidence" value="ECO:0000250"/>
    <property type="project" value="UniProtKB"/>
</dbReference>
<dbReference type="GO" id="GO:0006936">
    <property type="term" value="P:muscle contraction"/>
    <property type="evidence" value="ECO:0000315"/>
    <property type="project" value="UniProtKB"/>
</dbReference>
<dbReference type="GO" id="GO:0060415">
    <property type="term" value="P:muscle tissue morphogenesis"/>
    <property type="evidence" value="ECO:0000250"/>
    <property type="project" value="UniProtKB"/>
</dbReference>
<dbReference type="GO" id="GO:0007519">
    <property type="term" value="P:skeletal muscle tissue development"/>
    <property type="evidence" value="ECO:0000250"/>
    <property type="project" value="BHF-UCL"/>
</dbReference>
<dbReference type="FunFam" id="1.10.238.10:FF:000010">
    <property type="entry name" value="Myosin regulatory light chain 2, atrial isoform"/>
    <property type="match status" value="1"/>
</dbReference>
<dbReference type="FunFam" id="1.10.238.10:FF:000007">
    <property type="entry name" value="Putative myosin regulatory light chain sqh"/>
    <property type="match status" value="1"/>
</dbReference>
<dbReference type="Gene3D" id="1.10.238.10">
    <property type="entry name" value="EF-hand"/>
    <property type="match status" value="2"/>
</dbReference>
<dbReference type="InterPro" id="IPR011992">
    <property type="entry name" value="EF-hand-dom_pair"/>
</dbReference>
<dbReference type="InterPro" id="IPR018247">
    <property type="entry name" value="EF_Hand_1_Ca_BS"/>
</dbReference>
<dbReference type="InterPro" id="IPR002048">
    <property type="entry name" value="EF_hand_dom"/>
</dbReference>
<dbReference type="InterPro" id="IPR050403">
    <property type="entry name" value="Myosin_RLC"/>
</dbReference>
<dbReference type="PANTHER" id="PTHR23049">
    <property type="entry name" value="MYOSIN REGULATORY LIGHT CHAIN 2"/>
    <property type="match status" value="1"/>
</dbReference>
<dbReference type="Pfam" id="PF13405">
    <property type="entry name" value="EF-hand_6"/>
    <property type="match status" value="1"/>
</dbReference>
<dbReference type="SMART" id="SM00054">
    <property type="entry name" value="EFh"/>
    <property type="match status" value="2"/>
</dbReference>
<dbReference type="SUPFAM" id="SSF47473">
    <property type="entry name" value="EF-hand"/>
    <property type="match status" value="1"/>
</dbReference>
<dbReference type="PROSITE" id="PS00018">
    <property type="entry name" value="EF_HAND_1"/>
    <property type="match status" value="1"/>
</dbReference>
<dbReference type="PROSITE" id="PS50222">
    <property type="entry name" value="EF_HAND_2"/>
    <property type="match status" value="3"/>
</dbReference>
<sequence>MAPKRAKRRTVEGGSSSVFSMFDQTQIQEFKEAFTVIDQNRDGIIDKEDLRDTFAAMGRLNVKNEELDAMMKEASGPINFTVFLTMFGEKLKGADPEDVITGAFKVLDPEGKGTIKKKFLEELLTTQCDRFSQEEIKNMWAAFPPDVGGNVDYKNICYVITHGDAKDQE</sequence>
<feature type="initiator methionine" description="Removed" evidence="2">
    <location>
        <position position="1"/>
    </location>
</feature>
<feature type="chain" id="PRO_0000283746" description="Myosin regulatory light chain 11" evidence="2">
    <location>
        <begin position="2"/>
        <end position="169"/>
    </location>
</feature>
<feature type="domain" description="EF-hand 1" evidence="5">
    <location>
        <begin position="25"/>
        <end position="60"/>
    </location>
</feature>
<feature type="domain" description="EF-hand 2" evidence="5">
    <location>
        <begin position="95"/>
        <end position="130"/>
    </location>
</feature>
<feature type="domain" description="EF-hand 3" evidence="5">
    <location>
        <begin position="131"/>
        <end position="166"/>
    </location>
</feature>
<feature type="binding site" evidence="5">
    <location>
        <position position="38"/>
    </location>
    <ligand>
        <name>Ca(2+)</name>
        <dbReference type="ChEBI" id="CHEBI:29108"/>
    </ligand>
</feature>
<feature type="binding site" evidence="5">
    <location>
        <position position="40"/>
    </location>
    <ligand>
        <name>Ca(2+)</name>
        <dbReference type="ChEBI" id="CHEBI:29108"/>
    </ligand>
</feature>
<feature type="binding site" evidence="5">
    <location>
        <position position="42"/>
    </location>
    <ligand>
        <name>Ca(2+)</name>
        <dbReference type="ChEBI" id="CHEBI:29108"/>
    </ligand>
</feature>
<feature type="binding site" evidence="5">
    <location>
        <position position="49"/>
    </location>
    <ligand>
        <name>Ca(2+)</name>
        <dbReference type="ChEBI" id="CHEBI:29108"/>
    </ligand>
</feature>
<feature type="modified residue" description="N,N,N-trimethylalanine" evidence="2">
    <location>
        <position position="2"/>
    </location>
</feature>
<feature type="modified residue" description="Phosphoserine" evidence="4">
    <location>
        <position position="15"/>
    </location>
</feature>
<feature type="modified residue" description="Phosphoserine" evidence="4">
    <location>
        <position position="16"/>
    </location>
</feature>
<feature type="modified residue" description="Phosphothreonine" evidence="3">
    <location>
        <position position="25"/>
    </location>
</feature>
<feature type="modified residue" description="Phosphothreonine" evidence="3">
    <location>
        <position position="35"/>
    </location>
</feature>
<feature type="modified residue" description="Phosphoserine" evidence="3">
    <location>
        <position position="75"/>
    </location>
</feature>
<feature type="modified residue" description="Phosphothreonine" evidence="3">
    <location>
        <position position="101"/>
    </location>
</feature>
<feature type="sequence variant" id="VAR_085167" description="In DA1C; uncertain significance; dbSNP:rs2049733161." evidence="7">
    <original>A</original>
    <variation>V</variation>
    <location>
        <position position="33"/>
    </location>
</feature>
<feature type="sequence variant" id="VAR_085168" description="In DA1C; dbSNP:rs756765686." evidence="7">
    <original>C</original>
    <variation>F</variation>
    <location>
        <position position="157"/>
    </location>
</feature>
<feature type="sequence variant" id="VAR_085169" description="In DA1C; dbSNP:rs748809300." evidence="7">
    <original>C</original>
    <variation>R</variation>
    <location>
        <position position="157"/>
    </location>
</feature>
<feature type="sequence variant" id="VAR_085170" description="In DA1C; uncertain significance; dbSNP:rs2049768364." evidence="7">
    <original>G</original>
    <variation>S</variation>
    <location>
        <position position="163"/>
    </location>
</feature>
<feature type="sequence conflict" description="In Ref. 1; CAA40762 and 2; AAA91848." evidence="9" ref="1 2">
    <original>V</original>
    <variation>VA</variation>
    <location>
        <position position="11"/>
    </location>
</feature>
<feature type="sequence conflict" description="In Ref. 4; CAG33244." evidence="9" ref="4">
    <original>E</original>
    <variation>D</variation>
    <location>
        <position position="169"/>
    </location>
</feature>
<comment type="function">
    <text evidence="1">Myosin regulatory subunit that plays an essential role to maintain muscle integrity during early development (By similarity). Plays a role in muscle contraction (By similarity).</text>
</comment>
<comment type="subunit">
    <text evidence="9">Myosin is a hexamer of 2 heavy chains and 4 light chains.</text>
</comment>
<comment type="interaction">
    <interactant intactId="EBI-1390771">
        <id>Q96A32</id>
    </interactant>
    <interactant intactId="EBI-744302">
        <id>P14136</id>
        <label>GFAP</label>
    </interactant>
    <organismsDiffer>false</organismsDiffer>
    <experiments>3</experiments>
</comment>
<comment type="interaction">
    <interactant intactId="EBI-1390771">
        <id>Q96A32</id>
    </interactant>
    <interactant intactId="EBI-747754">
        <id>P28799</id>
        <label>GRN</label>
    </interactant>
    <organismsDiffer>false</organismsDiffer>
    <experiments>3</experiments>
</comment>
<comment type="interaction">
    <interactant intactId="EBI-1390771">
        <id>Q96A32</id>
    </interactant>
    <interactant intactId="EBI-1055254">
        <id>Q8WXH2</id>
        <label>JPH3</label>
    </interactant>
    <organismsDiffer>false</organismsDiffer>
    <experiments>3</experiments>
</comment>
<comment type="interaction">
    <interactant intactId="EBI-1390771">
        <id>Q96A32</id>
    </interactant>
    <interactant intactId="EBI-988601">
        <id>O43933</id>
        <label>PEX1</label>
    </interactant>
    <organismsDiffer>false</organismsDiffer>
    <experiments>3</experiments>
</comment>
<comment type="interaction">
    <interactant intactId="EBI-1390771">
        <id>Q96A32</id>
    </interactant>
    <interactant intactId="EBI-720609">
        <id>O76024</id>
        <label>WFS1</label>
    </interactant>
    <organismsDiffer>false</organismsDiffer>
    <experiments>3</experiments>
</comment>
<comment type="tissue specificity">
    <text evidence="6">Expressed in fetal and adult skeletal muscle.</text>
</comment>
<comment type="disease" evidence="7">
    <disease id="DI-05980">
        <name>Arthrogryposis, distal, 1C</name>
        <acronym>DA1C</acronym>
        <description>A form of distal arthrogryposis, a disease characterized by congenital joint contractures that mainly involve two or more distal parts of the limbs, in the absence of a primary neurological or muscle disease. DA1C patients show multiple congenital contractures, scoliosis, short stature, and segmental amyoplasia. DA1C inheritance can be autosomal recessive or autosomal dominant.</description>
        <dbReference type="MIM" id="619110"/>
    </disease>
    <text>The disease is caused by variants affecting the gene represented in this entry.</text>
</comment>
<accession>Q96A32</accession>
<accession>A0A024QZG6</accession>
<accession>B2RA83</accession>
<accession>Q14843</accession>
<accession>Q6IB41</accession>
<evidence type="ECO:0000250" key="1">
    <source>
        <dbReference type="UniProtKB" id="O93409"/>
    </source>
</evidence>
<evidence type="ECO:0000250" key="2">
    <source>
        <dbReference type="UniProtKB" id="P02608"/>
    </source>
</evidence>
<evidence type="ECO:0000250" key="3">
    <source>
        <dbReference type="UniProtKB" id="P04466"/>
    </source>
</evidence>
<evidence type="ECO:0000250" key="4">
    <source>
        <dbReference type="UniProtKB" id="P97457"/>
    </source>
</evidence>
<evidence type="ECO:0000255" key="5">
    <source>
        <dbReference type="PROSITE-ProRule" id="PRU00448"/>
    </source>
</evidence>
<evidence type="ECO:0000269" key="6">
    <source>
    </source>
</evidence>
<evidence type="ECO:0000269" key="7">
    <source>
    </source>
</evidence>
<evidence type="ECO:0000303" key="8">
    <source>
    </source>
</evidence>
<evidence type="ECO:0000305" key="9"/>
<evidence type="ECO:0000312" key="10">
    <source>
        <dbReference type="EMBL" id="AAA91848.1"/>
    </source>
</evidence>
<evidence type="ECO:0000312" key="11">
    <source>
        <dbReference type="EMBL" id="AAH12571.1"/>
    </source>
</evidence>
<evidence type="ECO:0000312" key="12">
    <source>
        <dbReference type="EMBL" id="AAK52797.1"/>
    </source>
</evidence>
<evidence type="ECO:0000312" key="13">
    <source>
        <dbReference type="EMBL" id="CAA40762.1"/>
    </source>
</evidence>
<evidence type="ECO:0000312" key="14">
    <source>
        <dbReference type="HGNC" id="HGNC:29824"/>
    </source>
</evidence>
<name>MYL11_HUMAN</name>
<keyword id="KW-0106">Calcium</keyword>
<keyword id="KW-0225">Disease variant</keyword>
<keyword id="KW-0479">Metal-binding</keyword>
<keyword id="KW-0488">Methylation</keyword>
<keyword id="KW-0505">Motor protein</keyword>
<keyword id="KW-0514">Muscle protein</keyword>
<keyword id="KW-0518">Myosin</keyword>
<keyword id="KW-0597">Phosphoprotein</keyword>
<keyword id="KW-1267">Proteomics identification</keyword>
<keyword id="KW-1185">Reference proteome</keyword>
<keyword id="KW-0677">Repeat</keyword>